<name>YBEU_ECOLI</name>
<feature type="chain" id="PRO_0000168684" description="Uncharacterized protein YbeU">
    <location>
        <begin position="1"/>
        <end position="235"/>
    </location>
</feature>
<comment type="similarity">
    <text evidence="1">To E.coli YbeR.</text>
</comment>
<evidence type="ECO:0000305" key="1"/>
<gene>
    <name type="primary">ybeU</name>
    <name type="ordered locus">b0648</name>
    <name type="ordered locus">JW0643</name>
</gene>
<keyword id="KW-1185">Reference proteome</keyword>
<dbReference type="EMBL" id="U82598">
    <property type="protein sequence ID" value="AAB40849.1"/>
    <property type="molecule type" value="Genomic_DNA"/>
</dbReference>
<dbReference type="EMBL" id="U00096">
    <property type="protein sequence ID" value="AAC73749.1"/>
    <property type="molecule type" value="Genomic_DNA"/>
</dbReference>
<dbReference type="EMBL" id="AP009048">
    <property type="protein sequence ID" value="BAA35295.1"/>
    <property type="molecule type" value="Genomic_DNA"/>
</dbReference>
<dbReference type="PIR" id="F64799">
    <property type="entry name" value="F64799"/>
</dbReference>
<dbReference type="RefSeq" id="NP_415181.1">
    <property type="nucleotide sequence ID" value="NC_000913.3"/>
</dbReference>
<dbReference type="RefSeq" id="WP_001030934.1">
    <property type="nucleotide sequence ID" value="NZ_SSZK01000037.1"/>
</dbReference>
<dbReference type="BioGRID" id="4261903">
    <property type="interactions" value="15"/>
</dbReference>
<dbReference type="FunCoup" id="P77427">
    <property type="interactions" value="42"/>
</dbReference>
<dbReference type="STRING" id="511145.b0648"/>
<dbReference type="PaxDb" id="511145-b0648"/>
<dbReference type="EnsemblBacteria" id="AAC73749">
    <property type="protein sequence ID" value="AAC73749"/>
    <property type="gene ID" value="b0648"/>
</dbReference>
<dbReference type="GeneID" id="945244"/>
<dbReference type="KEGG" id="ecj:JW0643"/>
<dbReference type="KEGG" id="eco:b0648"/>
<dbReference type="KEGG" id="ecoc:C3026_03240"/>
<dbReference type="PATRIC" id="fig|511145.12.peg.679"/>
<dbReference type="EchoBASE" id="EB3415"/>
<dbReference type="eggNOG" id="ENOG502ZBZM">
    <property type="taxonomic scope" value="Bacteria"/>
</dbReference>
<dbReference type="HOGENOM" id="CLU_100196_0_0_6"/>
<dbReference type="InParanoid" id="P77427"/>
<dbReference type="OMA" id="HIDCHEM"/>
<dbReference type="OrthoDB" id="8970044at2"/>
<dbReference type="PhylomeDB" id="P77427"/>
<dbReference type="BioCyc" id="EcoCyc:G6355-MONOMER"/>
<dbReference type="PRO" id="PR:P77427"/>
<dbReference type="Proteomes" id="UP000000625">
    <property type="component" value="Chromosome"/>
</dbReference>
<dbReference type="InterPro" id="IPR009677">
    <property type="entry name" value="DUF1266"/>
</dbReference>
<dbReference type="Pfam" id="PF06889">
    <property type="entry name" value="DUF1266"/>
    <property type="match status" value="1"/>
</dbReference>
<proteinExistence type="predicted"/>
<organism>
    <name type="scientific">Escherichia coli (strain K12)</name>
    <dbReference type="NCBI Taxonomy" id="83333"/>
    <lineage>
        <taxon>Bacteria</taxon>
        <taxon>Pseudomonadati</taxon>
        <taxon>Pseudomonadota</taxon>
        <taxon>Gammaproteobacteria</taxon>
        <taxon>Enterobacterales</taxon>
        <taxon>Enterobacteriaceae</taxon>
        <taxon>Escherichia</taxon>
    </lineage>
</organism>
<accession>P77427</accession>
<protein>
    <recommendedName>
        <fullName>Uncharacterized protein YbeU</fullName>
    </recommendedName>
</protein>
<reference key="1">
    <citation type="journal article" date="1996" name="DNA Res.">
        <title>A 718-kb DNA sequence of the Escherichia coli K-12 genome corresponding to the 12.7-28.0 min region on the linkage map.</title>
        <authorList>
            <person name="Oshima T."/>
            <person name="Aiba H."/>
            <person name="Baba T."/>
            <person name="Fujita K."/>
            <person name="Hayashi K."/>
            <person name="Honjo A."/>
            <person name="Ikemoto K."/>
            <person name="Inada T."/>
            <person name="Itoh T."/>
            <person name="Kajihara M."/>
            <person name="Kanai K."/>
            <person name="Kashimoto K."/>
            <person name="Kimura S."/>
            <person name="Kitagawa M."/>
            <person name="Makino K."/>
            <person name="Masuda S."/>
            <person name="Miki T."/>
            <person name="Mizobuchi K."/>
            <person name="Mori H."/>
            <person name="Motomura K."/>
            <person name="Nakamura Y."/>
            <person name="Nashimoto H."/>
            <person name="Nishio Y."/>
            <person name="Saito N."/>
            <person name="Sampei G."/>
            <person name="Seki Y."/>
            <person name="Tagami H."/>
            <person name="Takemoto K."/>
            <person name="Wada C."/>
            <person name="Yamamoto Y."/>
            <person name="Yano M."/>
            <person name="Horiuchi T."/>
        </authorList>
    </citation>
    <scope>NUCLEOTIDE SEQUENCE [LARGE SCALE GENOMIC DNA]</scope>
    <source>
        <strain>K12 / W3110 / ATCC 27325 / DSM 5911</strain>
    </source>
</reference>
<reference key="2">
    <citation type="submission" date="1997-01" db="EMBL/GenBank/DDBJ databases">
        <title>Sequence of minutes 4-25 of Escherichia coli.</title>
        <authorList>
            <person name="Chung E."/>
            <person name="Allen E."/>
            <person name="Araujo R."/>
            <person name="Aparicio A.M."/>
            <person name="Davis K."/>
            <person name="Duncan M."/>
            <person name="Federspiel N."/>
            <person name="Hyman R."/>
            <person name="Kalman S."/>
            <person name="Komp C."/>
            <person name="Kurdi O."/>
            <person name="Lew H."/>
            <person name="Lin D."/>
            <person name="Namath A."/>
            <person name="Oefner P."/>
            <person name="Roberts D."/>
            <person name="Schramm S."/>
            <person name="Davis R.W."/>
        </authorList>
    </citation>
    <scope>NUCLEOTIDE SEQUENCE [LARGE SCALE GENOMIC DNA]</scope>
    <source>
        <strain>K12 / MG1655 / ATCC 47076</strain>
    </source>
</reference>
<reference key="3">
    <citation type="journal article" date="1997" name="Science">
        <title>The complete genome sequence of Escherichia coli K-12.</title>
        <authorList>
            <person name="Blattner F.R."/>
            <person name="Plunkett G. III"/>
            <person name="Bloch C.A."/>
            <person name="Perna N.T."/>
            <person name="Burland V."/>
            <person name="Riley M."/>
            <person name="Collado-Vides J."/>
            <person name="Glasner J.D."/>
            <person name="Rode C.K."/>
            <person name="Mayhew G.F."/>
            <person name="Gregor J."/>
            <person name="Davis N.W."/>
            <person name="Kirkpatrick H.A."/>
            <person name="Goeden M.A."/>
            <person name="Rose D.J."/>
            <person name="Mau B."/>
            <person name="Shao Y."/>
        </authorList>
    </citation>
    <scope>NUCLEOTIDE SEQUENCE [LARGE SCALE GENOMIC DNA]</scope>
    <source>
        <strain>K12 / MG1655 / ATCC 47076</strain>
    </source>
</reference>
<reference key="4">
    <citation type="journal article" date="2006" name="Mol. Syst. Biol.">
        <title>Highly accurate genome sequences of Escherichia coli K-12 strains MG1655 and W3110.</title>
        <authorList>
            <person name="Hayashi K."/>
            <person name="Morooka N."/>
            <person name="Yamamoto Y."/>
            <person name="Fujita K."/>
            <person name="Isono K."/>
            <person name="Choi S."/>
            <person name="Ohtsubo E."/>
            <person name="Baba T."/>
            <person name="Wanner B.L."/>
            <person name="Mori H."/>
            <person name="Horiuchi T."/>
        </authorList>
    </citation>
    <scope>NUCLEOTIDE SEQUENCE [LARGE SCALE GENOMIC DNA]</scope>
    <source>
        <strain>K12 / W3110 / ATCC 27325 / DSM 5911</strain>
    </source>
</reference>
<sequence length="235" mass="27022">MNKEEQYLLFALSAPMEILNQGCKPAHDSPKMYTGIKEFELSSSWGINNRDDLIQTIYQMTDDGHANDLAGLYLTWHRSSPEEWKALIAGGSERGLIYTQFVAQTAMCCGEGGIKAWDYVRMGFLSRVGVLNKWLTEEESLWLQSRVYVRAHHYYHSWMHYFSAYSLGRLYWQSSQCEDNTSLREALTLYKYDSAGSRMFEELAAGSDRFYATLPWQPLTVQSECPVTLKDVSDL</sequence>